<evidence type="ECO:0000250" key="1"/>
<evidence type="ECO:0000250" key="2">
    <source>
        <dbReference type="UniProtKB" id="P62022"/>
    </source>
</evidence>
<evidence type="ECO:0000255" key="3">
    <source>
        <dbReference type="PROSITE-ProRule" id="PRU10035"/>
    </source>
</evidence>
<evidence type="ECO:0000255" key="4">
    <source>
        <dbReference type="PROSITE-ProRule" id="PRU10036"/>
    </source>
</evidence>
<evidence type="ECO:0000269" key="5">
    <source>
    </source>
</evidence>
<evidence type="ECO:0000305" key="6"/>
<reference key="1">
    <citation type="journal article" date="2004" name="Biochem. J.">
        <title>Molecular evolution and structure-function relationships of crotoxin-like and asparagine-6-containing phospholipases A2 in pit viper venoms.</title>
        <authorList>
            <person name="Chen Y.-H."/>
            <person name="Wang Y.-M."/>
            <person name="Hseu M.-J."/>
            <person name="Tsai I.-H."/>
        </authorList>
    </citation>
    <scope>NUCLEOTIDE SEQUENCE [MRNA]</scope>
    <scope>PROTEIN SEQUENCE OF 17-39</scope>
    <scope>FUNCTION</scope>
    <scope>BIOPHYSICOCHEMICAL PROPERTIES</scope>
    <scope>SUBUNIT</scope>
    <scope>MASS SPECTROMETRY</scope>
    <source>
        <tissue>Venom</tissue>
        <tissue>Venom gland</tissue>
    </source>
</reference>
<proteinExistence type="evidence at protein level"/>
<keyword id="KW-0106">Calcium</keyword>
<keyword id="KW-0903">Direct protein sequencing</keyword>
<keyword id="KW-1015">Disulfide bond</keyword>
<keyword id="KW-0378">Hydrolase</keyword>
<keyword id="KW-0442">Lipid degradation</keyword>
<keyword id="KW-0443">Lipid metabolism</keyword>
<keyword id="KW-0479">Metal-binding</keyword>
<keyword id="KW-0528">Neurotoxin</keyword>
<keyword id="KW-0638">Presynaptic neurotoxin</keyword>
<keyword id="KW-0964">Secreted</keyword>
<keyword id="KW-0732">Signal</keyword>
<keyword id="KW-0800">Toxin</keyword>
<protein>
    <recommendedName>
        <fullName>Basic phospholipase A2 sistruxin B</fullName>
        <shortName>svPLA2</shortName>
        <ecNumber>3.1.1.4</ecNumber>
    </recommendedName>
    <alternativeName>
        <fullName>Phosphatidylcholine 2-acylhydrolase</fullName>
    </alternativeName>
</protein>
<accession>Q6EER2</accession>
<name>PA2BB_SISTE</name>
<comment type="function">
    <text evidence="5">Snake venom phospholipase A2 (PLA2) that shows presynaptic neurotoxicity. PLA2 catalyzes the calcium-dependent hydrolysis of the 2-acyl groups in 3-sn-phosphoglycerides.</text>
</comment>
<comment type="catalytic activity">
    <reaction evidence="3 4">
        <text>a 1,2-diacyl-sn-glycero-3-phosphocholine + H2O = a 1-acyl-sn-glycero-3-phosphocholine + a fatty acid + H(+)</text>
        <dbReference type="Rhea" id="RHEA:15801"/>
        <dbReference type="ChEBI" id="CHEBI:15377"/>
        <dbReference type="ChEBI" id="CHEBI:15378"/>
        <dbReference type="ChEBI" id="CHEBI:28868"/>
        <dbReference type="ChEBI" id="CHEBI:57643"/>
        <dbReference type="ChEBI" id="CHEBI:58168"/>
        <dbReference type="EC" id="3.1.1.4"/>
    </reaction>
</comment>
<comment type="cofactor">
    <cofactor evidence="1">
        <name>Ca(2+)</name>
        <dbReference type="ChEBI" id="CHEBI:29108"/>
    </cofactor>
    <text evidence="1">Binds 1 Ca(2+) ion.</text>
</comment>
<comment type="biophysicochemical properties">
    <kinetics>
        <Vmax evidence="5">385.0 umol/min/mg enzyme with DPPC + deoxycholate as substrate (at pH 7.4 and 37 degrees Celsius)</Vmax>
        <Vmax evidence="5">192.0 umol/min/mg enzyme with DPPC + Triton X-100 as substrate (at pH 7.4 and 37 degrees Celsius)</Vmax>
        <text>When tested as a monomer.</text>
    </kinetics>
</comment>
<comment type="subunit">
    <text evidence="5">Heterodimer of an acidic subunit and a basic chain. The acidic subunit is non-toxic, without enzymatic activity and comprises 3 peptides that are cross-linked by 7 disulfide bridges. The basic subunit is toxic, has phospholipase A2 activity and is composed of a single chain.</text>
</comment>
<comment type="subcellular location">
    <subcellularLocation>
        <location>Secreted</location>
    </subcellularLocation>
</comment>
<comment type="tissue specificity">
    <text>Expressed by the venom gland.</text>
</comment>
<comment type="mass spectrometry" mass="14122.0" method="Electrospray" evidence="5"/>
<comment type="similarity">
    <text evidence="6">Belongs to the phospholipase A2 family. Group II subfamily. D49 sub-subfamily.</text>
</comment>
<feature type="signal peptide" evidence="5">
    <location>
        <begin position="1"/>
        <end position="16"/>
    </location>
</feature>
<feature type="chain" id="PRO_0000418572" description="Basic phospholipase A2 sistruxin B">
    <location>
        <begin position="17"/>
        <end position="138"/>
    </location>
</feature>
<feature type="active site" evidence="2">
    <location>
        <position position="63"/>
    </location>
</feature>
<feature type="active site" evidence="2">
    <location>
        <position position="105"/>
    </location>
</feature>
<feature type="binding site" evidence="2">
    <location>
        <position position="43"/>
    </location>
    <ligand>
        <name>Ca(2+)</name>
        <dbReference type="ChEBI" id="CHEBI:29108"/>
    </ligand>
</feature>
<feature type="binding site" evidence="2">
    <location>
        <position position="45"/>
    </location>
    <ligand>
        <name>Ca(2+)</name>
        <dbReference type="ChEBI" id="CHEBI:29108"/>
    </ligand>
</feature>
<feature type="binding site" evidence="2">
    <location>
        <position position="47"/>
    </location>
    <ligand>
        <name>Ca(2+)</name>
        <dbReference type="ChEBI" id="CHEBI:29108"/>
    </ligand>
</feature>
<feature type="binding site" evidence="2">
    <location>
        <position position="64"/>
    </location>
    <ligand>
        <name>Ca(2+)</name>
        <dbReference type="ChEBI" id="CHEBI:29108"/>
    </ligand>
</feature>
<feature type="disulfide bond" evidence="2">
    <location>
        <begin position="42"/>
        <end position="131"/>
    </location>
</feature>
<feature type="disulfide bond" evidence="2">
    <location>
        <begin position="44"/>
        <end position="60"/>
    </location>
</feature>
<feature type="disulfide bond" evidence="2">
    <location>
        <begin position="59"/>
        <end position="111"/>
    </location>
</feature>
<feature type="disulfide bond" evidence="2">
    <location>
        <begin position="65"/>
        <end position="138"/>
    </location>
</feature>
<feature type="disulfide bond" evidence="2">
    <location>
        <begin position="66"/>
        <end position="104"/>
    </location>
</feature>
<feature type="disulfide bond" evidence="2">
    <location>
        <begin position="73"/>
        <end position="97"/>
    </location>
</feature>
<feature type="disulfide bond" evidence="2">
    <location>
        <begin position="91"/>
        <end position="102"/>
    </location>
</feature>
<feature type="sequence conflict" description="In Ref. 1; AA sequence." evidence="6" ref="1">
    <original>K</original>
    <variation>A</variation>
    <location>
        <position position="31"/>
    </location>
</feature>
<dbReference type="EC" id="3.1.1.4"/>
<dbReference type="EMBL" id="AY355170">
    <property type="protein sequence ID" value="AAR14164.1"/>
    <property type="molecule type" value="mRNA"/>
</dbReference>
<dbReference type="SMR" id="Q6EER2"/>
<dbReference type="GO" id="GO:0005576">
    <property type="term" value="C:extracellular region"/>
    <property type="evidence" value="ECO:0007669"/>
    <property type="project" value="UniProtKB-SubCell"/>
</dbReference>
<dbReference type="GO" id="GO:0005509">
    <property type="term" value="F:calcium ion binding"/>
    <property type="evidence" value="ECO:0007669"/>
    <property type="project" value="InterPro"/>
</dbReference>
<dbReference type="GO" id="GO:0047498">
    <property type="term" value="F:calcium-dependent phospholipase A2 activity"/>
    <property type="evidence" value="ECO:0007669"/>
    <property type="project" value="TreeGrafter"/>
</dbReference>
<dbReference type="GO" id="GO:0005543">
    <property type="term" value="F:phospholipid binding"/>
    <property type="evidence" value="ECO:0007669"/>
    <property type="project" value="TreeGrafter"/>
</dbReference>
<dbReference type="GO" id="GO:0090729">
    <property type="term" value="F:toxin activity"/>
    <property type="evidence" value="ECO:0007669"/>
    <property type="project" value="UniProtKB-KW"/>
</dbReference>
<dbReference type="GO" id="GO:0050482">
    <property type="term" value="P:arachidonate secretion"/>
    <property type="evidence" value="ECO:0007669"/>
    <property type="project" value="InterPro"/>
</dbReference>
<dbReference type="GO" id="GO:0016042">
    <property type="term" value="P:lipid catabolic process"/>
    <property type="evidence" value="ECO:0007669"/>
    <property type="project" value="UniProtKB-KW"/>
</dbReference>
<dbReference type="GO" id="GO:0042130">
    <property type="term" value="P:negative regulation of T cell proliferation"/>
    <property type="evidence" value="ECO:0007669"/>
    <property type="project" value="TreeGrafter"/>
</dbReference>
<dbReference type="GO" id="GO:0006644">
    <property type="term" value="P:phospholipid metabolic process"/>
    <property type="evidence" value="ECO:0007669"/>
    <property type="project" value="InterPro"/>
</dbReference>
<dbReference type="CDD" id="cd00125">
    <property type="entry name" value="PLA2c"/>
    <property type="match status" value="1"/>
</dbReference>
<dbReference type="FunFam" id="1.20.90.10:FF:000001">
    <property type="entry name" value="Basic phospholipase A2 homolog"/>
    <property type="match status" value="1"/>
</dbReference>
<dbReference type="Gene3D" id="1.20.90.10">
    <property type="entry name" value="Phospholipase A2 domain"/>
    <property type="match status" value="1"/>
</dbReference>
<dbReference type="InterPro" id="IPR001211">
    <property type="entry name" value="PLipase_A2"/>
</dbReference>
<dbReference type="InterPro" id="IPR033112">
    <property type="entry name" value="PLipase_A2_Asp_AS"/>
</dbReference>
<dbReference type="InterPro" id="IPR016090">
    <property type="entry name" value="PLipase_A2_dom"/>
</dbReference>
<dbReference type="InterPro" id="IPR036444">
    <property type="entry name" value="PLipase_A2_dom_sf"/>
</dbReference>
<dbReference type="InterPro" id="IPR033113">
    <property type="entry name" value="PLipase_A2_His_AS"/>
</dbReference>
<dbReference type="PANTHER" id="PTHR11716">
    <property type="entry name" value="PHOSPHOLIPASE A2 FAMILY MEMBER"/>
    <property type="match status" value="1"/>
</dbReference>
<dbReference type="PANTHER" id="PTHR11716:SF9">
    <property type="entry name" value="PHOSPHOLIPASE A2, MEMBRANE ASSOCIATED"/>
    <property type="match status" value="1"/>
</dbReference>
<dbReference type="Pfam" id="PF00068">
    <property type="entry name" value="Phospholip_A2_1"/>
    <property type="match status" value="1"/>
</dbReference>
<dbReference type="PRINTS" id="PR00389">
    <property type="entry name" value="PHPHLIPASEA2"/>
</dbReference>
<dbReference type="SMART" id="SM00085">
    <property type="entry name" value="PA2c"/>
    <property type="match status" value="1"/>
</dbReference>
<dbReference type="SUPFAM" id="SSF48619">
    <property type="entry name" value="Phospholipase A2, PLA2"/>
    <property type="match status" value="1"/>
</dbReference>
<dbReference type="PROSITE" id="PS00119">
    <property type="entry name" value="PA2_ASP"/>
    <property type="match status" value="1"/>
</dbReference>
<dbReference type="PROSITE" id="PS00118">
    <property type="entry name" value="PA2_HIS"/>
    <property type="match status" value="1"/>
</dbReference>
<organism>
    <name type="scientific">Sistrurus tergeminus</name>
    <name type="common">Western massasauga</name>
    <name type="synonym">Sistrurus catenatus tergeminus</name>
    <dbReference type="NCBI Taxonomy" id="8757"/>
    <lineage>
        <taxon>Eukaryota</taxon>
        <taxon>Metazoa</taxon>
        <taxon>Chordata</taxon>
        <taxon>Craniata</taxon>
        <taxon>Vertebrata</taxon>
        <taxon>Euteleostomi</taxon>
        <taxon>Lepidosauria</taxon>
        <taxon>Squamata</taxon>
        <taxon>Bifurcata</taxon>
        <taxon>Unidentata</taxon>
        <taxon>Episquamata</taxon>
        <taxon>Toxicofera</taxon>
        <taxon>Serpentes</taxon>
        <taxon>Colubroidea</taxon>
        <taxon>Viperidae</taxon>
        <taxon>Crotalinae</taxon>
        <taxon>Sistrurus</taxon>
    </lineage>
</organism>
<sequence length="138" mass="15844">MRALWIVAVLLVGVEGNLLQFNKMIKFETNKNAIPFYAFYGCYCGWGGRGRPKDATDRCCFVHDCCYGKLPNCDTKWDIYSYSLKSGFITCGKGTWCEEQICECDRVAAECLRRSLSTYKYGYMFYLDSRCKGPSEQC</sequence>